<accession>P57057</accession>
<accession>D3DSJ7</accession>
<accession>Q9HAQ1</accession>
<name>G6PT2_HUMAN</name>
<sequence length="533" mass="57648">MARLPAGIRFIISFSRDQWYRAFIFILTFLLYASFHLSRKPISIVKGELHKYCTAWDEADVRFSSQNRKSGSAAPHQLPDNETDCGWAPFDKNNYQQLLGALDYSFLCAYAVGMYLSGIIGERLPIRYYLTFGMLASGAFTALFGLGYFYNIHSFGFYVVTQVINGLVQTTGWPSVVTCLGNWFGKGRRGLIMGVWNSHTSVGNILGSLIAGYWVSTCWGLSFVVPGAIVAAMGIVCFLFLIEHPNDVRCSSTLVTHSKGYENGTNRLRLQKQILKSEKNKPLDPEMQCLLLSDGKGSIHPNHVVILPGDGGSGTAAISFTGALKIPGVIEFSLCLLFAKLVSYTFLFWLPLYITNVDHLDAKKAGELSTLFDVGGIFGGILAGVISDRLEKRASTCGLMLLLAAPTLYIFSTVSKMGLEATIAMLLLSGALVSGPYTLITTAVSADLGTHKSLKGNAHALSTVTAIIDGTGSVGAALGPLLAGLLSPSGWSNVFYMLMFADACALLFLIRLIHKELSCPGSATGDQVPFKEQ</sequence>
<organism>
    <name type="scientific">Homo sapiens</name>
    <name type="common">Human</name>
    <dbReference type="NCBI Taxonomy" id="9606"/>
    <lineage>
        <taxon>Eukaryota</taxon>
        <taxon>Metazoa</taxon>
        <taxon>Chordata</taxon>
        <taxon>Craniata</taxon>
        <taxon>Vertebrata</taxon>
        <taxon>Euteleostomi</taxon>
        <taxon>Mammalia</taxon>
        <taxon>Eutheria</taxon>
        <taxon>Euarchontoglires</taxon>
        <taxon>Primates</taxon>
        <taxon>Haplorrhini</taxon>
        <taxon>Catarrhini</taxon>
        <taxon>Hominidae</taxon>
        <taxon>Homo</taxon>
    </lineage>
</organism>
<gene>
    <name evidence="8" type="primary">SLC37A1</name>
    <name evidence="5" type="synonym">G3PP</name>
</gene>
<keyword id="KW-0050">Antiport</keyword>
<keyword id="KW-0256">Endoplasmic reticulum</keyword>
<keyword id="KW-0325">Glycoprotein</keyword>
<keyword id="KW-0472">Membrane</keyword>
<keyword id="KW-1267">Proteomics identification</keyword>
<keyword id="KW-1185">Reference proteome</keyword>
<keyword id="KW-0762">Sugar transport</keyword>
<keyword id="KW-0812">Transmembrane</keyword>
<keyword id="KW-1133">Transmembrane helix</keyword>
<keyword id="KW-0813">Transport</keyword>
<comment type="function">
    <text evidence="3">Inorganic phosphate and glucose-6-phosphate antiporter. May transport cytoplasmic glucose-6-phosphate into the lumen of the endoplasmic reticulum and translocate inorganic phosphate into the opposite direction. Independent of a lumenal glucose-6-phosphatase. May not play a role in homeostatic regulation of blood glucose levels.</text>
</comment>
<comment type="catalytic activity">
    <reaction evidence="3">
        <text>D-glucose 6-phosphate(in) + phosphate(out) = D-glucose 6-phosphate(out) + phosphate(in)</text>
        <dbReference type="Rhea" id="RHEA:71535"/>
        <dbReference type="ChEBI" id="CHEBI:43474"/>
        <dbReference type="ChEBI" id="CHEBI:61548"/>
    </reaction>
</comment>
<comment type="activity regulation">
    <text evidence="3">Inhibited by vanadate but not by chlorogenic acid.</text>
</comment>
<comment type="subcellular location">
    <subcellularLocation>
        <location evidence="3">Endoplasmic reticulum membrane</location>
        <topology evidence="1">Multi-pass membrane protein</topology>
    </subcellularLocation>
</comment>
<comment type="tissue specificity">
    <text evidence="2 3">Expressed in numerous tissues, with highest expression in pancreas, kidney, bone marrow, spleen, liver, small intestine, as well as in fetal brain, liver and spleen.</text>
</comment>
<comment type="similarity">
    <text evidence="6">Belongs to the major facilitator superfamily. Organophosphate:Pi antiporter (OPA) (TC 2.A.1.4) family.</text>
</comment>
<feature type="chain" id="PRO_0000199890" description="Glucose-6-phosphate exchanger SLC37A1">
    <location>
        <begin position="1"/>
        <end position="533"/>
    </location>
</feature>
<feature type="transmembrane region" description="Helical" evidence="1">
    <location>
        <begin position="18"/>
        <end position="38"/>
    </location>
</feature>
<feature type="transmembrane region" description="Helical" evidence="1">
    <location>
        <begin position="100"/>
        <end position="120"/>
    </location>
</feature>
<feature type="transmembrane region" description="Helical" evidence="1">
    <location>
        <begin position="129"/>
        <end position="149"/>
    </location>
</feature>
<feature type="transmembrane region" description="Helical" evidence="1">
    <location>
        <begin position="157"/>
        <end position="177"/>
    </location>
</feature>
<feature type="transmembrane region" description="Helical" evidence="1">
    <location>
        <begin position="222"/>
        <end position="242"/>
    </location>
</feature>
<feature type="transmembrane region" description="Helical" evidence="1">
    <location>
        <begin position="304"/>
        <end position="324"/>
    </location>
</feature>
<feature type="transmembrane region" description="Helical" evidence="1">
    <location>
        <begin position="334"/>
        <end position="354"/>
    </location>
</feature>
<feature type="transmembrane region" description="Helical" evidence="1">
    <location>
        <begin position="366"/>
        <end position="386"/>
    </location>
</feature>
<feature type="transmembrane region" description="Helical" evidence="1">
    <location>
        <begin position="394"/>
        <end position="414"/>
    </location>
</feature>
<feature type="transmembrane region" description="Helical" evidence="1">
    <location>
        <begin position="423"/>
        <end position="443"/>
    </location>
</feature>
<feature type="transmembrane region" description="Helical" evidence="1">
    <location>
        <begin position="466"/>
        <end position="486"/>
    </location>
</feature>
<feature type="transmembrane region" description="Helical" evidence="1">
    <location>
        <begin position="490"/>
        <end position="510"/>
    </location>
</feature>
<feature type="glycosylation site" description="N-linked (GlcNAc...) asparagine" evidence="1">
    <location>
        <position position="81"/>
    </location>
</feature>
<feature type="glycosylation site" description="N-linked (GlcNAc...) asparagine" evidence="1">
    <location>
        <position position="263"/>
    </location>
</feature>
<feature type="sequence variant" id="VAR_017110" description="In dbSNP:rs768541152." evidence="2">
    <original>D</original>
    <variation>N</variation>
    <location>
        <position position="247"/>
    </location>
</feature>
<feature type="sequence variant" id="VAR_017111" description="In dbSNP:rs228104." evidence="4">
    <original>V</original>
    <variation>I</variation>
    <location>
        <position position="414"/>
    </location>
</feature>
<feature type="sequence conflict" description="In Ref. 2; AAG29853." evidence="6" ref="2">
    <original>F</original>
    <variation>L</variation>
    <location>
        <position position="223"/>
    </location>
</feature>
<feature type="sequence conflict" description="In Ref. 2; AAG29853." evidence="6" ref="2">
    <original>H</original>
    <variation>Q</variation>
    <location>
        <position position="303"/>
    </location>
</feature>
<evidence type="ECO:0000255" key="1"/>
<evidence type="ECO:0000269" key="2">
    <source>
    </source>
</evidence>
<evidence type="ECO:0000269" key="3">
    <source>
    </source>
</evidence>
<evidence type="ECO:0000269" key="4">
    <source ref="2"/>
</evidence>
<evidence type="ECO:0000303" key="5">
    <source>
    </source>
</evidence>
<evidence type="ECO:0000305" key="6"/>
<evidence type="ECO:0000305" key="7">
    <source>
    </source>
</evidence>
<evidence type="ECO:0000312" key="8">
    <source>
        <dbReference type="HGNC" id="HGNC:11024"/>
    </source>
</evidence>
<proteinExistence type="evidence at protein level"/>
<reference key="1">
    <citation type="journal article" date="2000" name="Genomics">
        <title>Cloning and characterization of a putative human glycerol 3-phosphate permease gene (SLC37A1 or G3PP) on 21q22.3: mutation analysis in two candidate phenotypes, DFNB10 and a glycerol kinase deficiency.</title>
        <authorList>
            <person name="Bartoloni L."/>
            <person name="Wattenhofer M."/>
            <person name="Kudoh J."/>
            <person name="Berry A."/>
            <person name="Shibuya K."/>
            <person name="Kawasaki K."/>
            <person name="Wang J."/>
            <person name="Asakawa S."/>
            <person name="Talior I."/>
            <person name="Bonne-Tamir B."/>
            <person name="Rossier C."/>
            <person name="Michaud J."/>
            <person name="McCabe E.R.B."/>
            <person name="Minoshima S."/>
            <person name="Shimizu N."/>
            <person name="Scott H.S."/>
            <person name="Antonarakis S.E."/>
        </authorList>
    </citation>
    <scope>NUCLEOTIDE SEQUENCE [MRNA]</scope>
    <scope>VARIANT ASN-247</scope>
    <scope>TISSUE SPECIFICITY</scope>
</reference>
<reference key="2">
    <citation type="submission" date="2000-10" db="EMBL/GenBank/DDBJ databases">
        <title>Cloning and characterization of human glycerol 3-phosphate permease gene (SLC37A1).</title>
        <authorList>
            <person name="Solans A."/>
            <person name="Estivill X."/>
            <person name="de la Luna S."/>
        </authorList>
    </citation>
    <scope>NUCLEOTIDE SEQUENCE [MRNA]</scope>
    <scope>VARIANT ILE-414</scope>
</reference>
<reference key="3">
    <citation type="journal article" date="2000" name="Nature">
        <title>The DNA sequence of human chromosome 21.</title>
        <authorList>
            <person name="Hattori M."/>
            <person name="Fujiyama A."/>
            <person name="Taylor T.D."/>
            <person name="Watanabe H."/>
            <person name="Yada T."/>
            <person name="Park H.-S."/>
            <person name="Toyoda A."/>
            <person name="Ishii K."/>
            <person name="Totoki Y."/>
            <person name="Choi D.-K."/>
            <person name="Groner Y."/>
            <person name="Soeda E."/>
            <person name="Ohki M."/>
            <person name="Takagi T."/>
            <person name="Sakaki Y."/>
            <person name="Taudien S."/>
            <person name="Blechschmidt K."/>
            <person name="Polley A."/>
            <person name="Menzel U."/>
            <person name="Delabar J."/>
            <person name="Kumpf K."/>
            <person name="Lehmann R."/>
            <person name="Patterson D."/>
            <person name="Reichwald K."/>
            <person name="Rump A."/>
            <person name="Schillhabel M."/>
            <person name="Schudy A."/>
            <person name="Zimmermann W."/>
            <person name="Rosenthal A."/>
            <person name="Kudoh J."/>
            <person name="Shibuya K."/>
            <person name="Kawasaki K."/>
            <person name="Asakawa S."/>
            <person name="Shintani A."/>
            <person name="Sasaki T."/>
            <person name="Nagamine K."/>
            <person name="Mitsuyama S."/>
            <person name="Antonarakis S.E."/>
            <person name="Minoshima S."/>
            <person name="Shimizu N."/>
            <person name="Nordsiek G."/>
            <person name="Hornischer K."/>
            <person name="Brandt P."/>
            <person name="Scharfe M."/>
            <person name="Schoen O."/>
            <person name="Desario A."/>
            <person name="Reichelt J."/>
            <person name="Kauer G."/>
            <person name="Bloecker H."/>
            <person name="Ramser J."/>
            <person name="Beck A."/>
            <person name="Klages S."/>
            <person name="Hennig S."/>
            <person name="Riesselmann L."/>
            <person name="Dagand E."/>
            <person name="Wehrmeyer S."/>
            <person name="Borzym K."/>
            <person name="Gardiner K."/>
            <person name="Nizetic D."/>
            <person name="Francis F."/>
            <person name="Lehrach H."/>
            <person name="Reinhardt R."/>
            <person name="Yaspo M.-L."/>
        </authorList>
    </citation>
    <scope>NUCLEOTIDE SEQUENCE [LARGE SCALE GENOMIC DNA]</scope>
</reference>
<reference key="4">
    <citation type="submission" date="2005-09" db="EMBL/GenBank/DDBJ databases">
        <authorList>
            <person name="Mural R.J."/>
            <person name="Istrail S."/>
            <person name="Sutton G.G."/>
            <person name="Florea L."/>
            <person name="Halpern A.L."/>
            <person name="Mobarry C.M."/>
            <person name="Lippert R."/>
            <person name="Walenz B."/>
            <person name="Shatkay H."/>
            <person name="Dew I."/>
            <person name="Miller J.R."/>
            <person name="Flanigan M.J."/>
            <person name="Edwards N.J."/>
            <person name="Bolanos R."/>
            <person name="Fasulo D."/>
            <person name="Halldorsson B.V."/>
            <person name="Hannenhalli S."/>
            <person name="Turner R."/>
            <person name="Yooseph S."/>
            <person name="Lu F."/>
            <person name="Nusskern D.R."/>
            <person name="Shue B.C."/>
            <person name="Zheng X.H."/>
            <person name="Zhong F."/>
            <person name="Delcher A.L."/>
            <person name="Huson D.H."/>
            <person name="Kravitz S.A."/>
            <person name="Mouchard L."/>
            <person name="Reinert K."/>
            <person name="Remington K.A."/>
            <person name="Clark A.G."/>
            <person name="Waterman M.S."/>
            <person name="Eichler E.E."/>
            <person name="Adams M.D."/>
            <person name="Hunkapiller M.W."/>
            <person name="Myers E.W."/>
            <person name="Venter J.C."/>
        </authorList>
    </citation>
    <scope>NUCLEOTIDE SEQUENCE [LARGE SCALE GENOMIC DNA]</scope>
</reference>
<reference key="5">
    <citation type="journal article" date="2011" name="PLoS ONE">
        <title>SLC37A1 and SLC37A2 are phosphate-linked, glucose-6-phosphate antiporters.</title>
        <authorList>
            <person name="Pan C.J."/>
            <person name="Chen S.Y."/>
            <person name="Jun H.S."/>
            <person name="Lin S.R."/>
            <person name="Mansfield B.C."/>
            <person name="Chou J.Y."/>
        </authorList>
    </citation>
    <scope>FUNCTION</scope>
    <scope>SUBCELLULAR LOCATION</scope>
    <scope>ACTIVITY REGULATION</scope>
    <scope>TISSUE SPECIFICITY</scope>
    <scope>TRANSPORTER ACTIVITY</scope>
</reference>
<dbReference type="EMBL" id="AJ269529">
    <property type="protein sequence ID" value="CAB87248.1"/>
    <property type="molecule type" value="mRNA"/>
</dbReference>
<dbReference type="EMBL" id="AJ277912">
    <property type="protein sequence ID" value="CAB91985.1"/>
    <property type="molecule type" value="mRNA"/>
</dbReference>
<dbReference type="EMBL" id="AJ277913">
    <property type="protein sequence ID" value="CAB91986.1"/>
    <property type="molecule type" value="mRNA"/>
</dbReference>
<dbReference type="EMBL" id="AF311320">
    <property type="protein sequence ID" value="AAG29853.1"/>
    <property type="molecule type" value="mRNA"/>
</dbReference>
<dbReference type="EMBL" id="AP001625">
    <property type="status" value="NOT_ANNOTATED_CDS"/>
    <property type="molecule type" value="Genomic_DNA"/>
</dbReference>
<dbReference type="EMBL" id="CH471079">
    <property type="protein sequence ID" value="EAX09552.1"/>
    <property type="molecule type" value="Genomic_DNA"/>
</dbReference>
<dbReference type="EMBL" id="CH471079">
    <property type="protein sequence ID" value="EAX09553.1"/>
    <property type="molecule type" value="Genomic_DNA"/>
</dbReference>
<dbReference type="CCDS" id="CCDS13689.1"/>
<dbReference type="RefSeq" id="NP_001307466.1">
    <property type="nucleotide sequence ID" value="NM_001320537.2"/>
</dbReference>
<dbReference type="RefSeq" id="NP_061837.3">
    <property type="nucleotide sequence ID" value="NM_018964.3"/>
</dbReference>
<dbReference type="RefSeq" id="XP_016883866.1">
    <property type="nucleotide sequence ID" value="XM_017028377.2"/>
</dbReference>
<dbReference type="RefSeq" id="XP_016883867.1">
    <property type="nucleotide sequence ID" value="XM_017028378.1"/>
</dbReference>
<dbReference type="RefSeq" id="XP_016883868.1">
    <property type="nucleotide sequence ID" value="XM_017028379.2"/>
</dbReference>
<dbReference type="RefSeq" id="XP_016883869.1">
    <property type="nucleotide sequence ID" value="XM_017028380.2"/>
</dbReference>
<dbReference type="RefSeq" id="XP_047296805.1">
    <property type="nucleotide sequence ID" value="XM_047440849.1"/>
</dbReference>
<dbReference type="BioGRID" id="119832">
    <property type="interactions" value="6"/>
</dbReference>
<dbReference type="FunCoup" id="P57057">
    <property type="interactions" value="465"/>
</dbReference>
<dbReference type="IntAct" id="P57057">
    <property type="interactions" value="5"/>
</dbReference>
<dbReference type="MINT" id="P57057"/>
<dbReference type="STRING" id="9606.ENSP00000344648"/>
<dbReference type="TCDB" id="2.A.1.4.7">
    <property type="family name" value="the major facilitator superfamily (mfs)"/>
</dbReference>
<dbReference type="GlyCosmos" id="P57057">
    <property type="glycosylation" value="2 sites, No reported glycans"/>
</dbReference>
<dbReference type="GlyGen" id="P57057">
    <property type="glycosylation" value="2 sites, 1 N-linked glycan (1 site)"/>
</dbReference>
<dbReference type="iPTMnet" id="P57057"/>
<dbReference type="PhosphoSitePlus" id="P57057"/>
<dbReference type="SwissPalm" id="P57057"/>
<dbReference type="BioMuta" id="SLC37A1"/>
<dbReference type="DMDM" id="317373359"/>
<dbReference type="jPOST" id="P57057"/>
<dbReference type="MassIVE" id="P57057"/>
<dbReference type="PaxDb" id="9606-ENSP00000344648"/>
<dbReference type="PeptideAtlas" id="P57057"/>
<dbReference type="ProteomicsDB" id="56976"/>
<dbReference type="Antibodypedia" id="23842">
    <property type="antibodies" value="73 antibodies from 18 providers"/>
</dbReference>
<dbReference type="DNASU" id="54020"/>
<dbReference type="Ensembl" id="ENST00000352133.3">
    <property type="protein sequence ID" value="ENSP00000344648.2"/>
    <property type="gene ID" value="ENSG00000160190.14"/>
</dbReference>
<dbReference type="Ensembl" id="ENST00000398341.7">
    <property type="protein sequence ID" value="ENSP00000381383.3"/>
    <property type="gene ID" value="ENSG00000160190.14"/>
</dbReference>
<dbReference type="GeneID" id="54020"/>
<dbReference type="KEGG" id="hsa:54020"/>
<dbReference type="MANE-Select" id="ENST00000352133.3">
    <property type="protein sequence ID" value="ENSP00000344648.2"/>
    <property type="RefSeq nucleotide sequence ID" value="NM_001320537.2"/>
    <property type="RefSeq protein sequence ID" value="NP_001307466.1"/>
</dbReference>
<dbReference type="UCSC" id="uc002zbi.3">
    <property type="organism name" value="human"/>
</dbReference>
<dbReference type="AGR" id="HGNC:11024"/>
<dbReference type="CTD" id="54020"/>
<dbReference type="DisGeNET" id="54020"/>
<dbReference type="GeneCards" id="SLC37A1"/>
<dbReference type="HGNC" id="HGNC:11024">
    <property type="gene designation" value="SLC37A1"/>
</dbReference>
<dbReference type="HPA" id="ENSG00000160190">
    <property type="expression patterns" value="Tissue enhanced (intestine)"/>
</dbReference>
<dbReference type="MIM" id="608094">
    <property type="type" value="gene"/>
</dbReference>
<dbReference type="neXtProt" id="NX_P57057"/>
<dbReference type="OpenTargets" id="ENSG00000160190"/>
<dbReference type="PharmGKB" id="PA35892"/>
<dbReference type="VEuPathDB" id="HostDB:ENSG00000160190"/>
<dbReference type="eggNOG" id="KOG2533">
    <property type="taxonomic scope" value="Eukaryota"/>
</dbReference>
<dbReference type="GeneTree" id="ENSGT00940000159245"/>
<dbReference type="HOGENOM" id="CLU_001265_31_6_1"/>
<dbReference type="InParanoid" id="P57057"/>
<dbReference type="OMA" id="YERMPAL"/>
<dbReference type="OrthoDB" id="3639251at2759"/>
<dbReference type="PAN-GO" id="P57057">
    <property type="GO annotations" value="4 GO annotations based on evolutionary models"/>
</dbReference>
<dbReference type="PhylomeDB" id="P57057"/>
<dbReference type="TreeFam" id="TF314991"/>
<dbReference type="PathwayCommons" id="P57057"/>
<dbReference type="Reactome" id="R-HSA-70263">
    <property type="pathway name" value="Gluconeogenesis"/>
</dbReference>
<dbReference type="SignaLink" id="P57057"/>
<dbReference type="BioGRID-ORCS" id="54020">
    <property type="hits" value="9 hits in 1154 CRISPR screens"/>
</dbReference>
<dbReference type="ChiTaRS" id="SLC37A1">
    <property type="organism name" value="human"/>
</dbReference>
<dbReference type="GenomeRNAi" id="54020"/>
<dbReference type="Pharos" id="P57057">
    <property type="development level" value="Tbio"/>
</dbReference>
<dbReference type="PRO" id="PR:P57057"/>
<dbReference type="Proteomes" id="UP000005640">
    <property type="component" value="Chromosome 21"/>
</dbReference>
<dbReference type="RNAct" id="P57057">
    <property type="molecule type" value="protein"/>
</dbReference>
<dbReference type="Bgee" id="ENSG00000160190">
    <property type="expression patterns" value="Expressed in olfactory segment of nasal mucosa and 123 other cell types or tissues"/>
</dbReference>
<dbReference type="ExpressionAtlas" id="P57057">
    <property type="expression patterns" value="baseline and differential"/>
</dbReference>
<dbReference type="GO" id="GO:0005789">
    <property type="term" value="C:endoplasmic reticulum membrane"/>
    <property type="evidence" value="ECO:0000314"/>
    <property type="project" value="UniProtKB"/>
</dbReference>
<dbReference type="GO" id="GO:0016020">
    <property type="term" value="C:membrane"/>
    <property type="evidence" value="ECO:0007005"/>
    <property type="project" value="UniProtKB"/>
</dbReference>
<dbReference type="GO" id="GO:0061513">
    <property type="term" value="F:glucose 6-phosphate:phosphate antiporter activity"/>
    <property type="evidence" value="ECO:0000314"/>
    <property type="project" value="UniProtKB"/>
</dbReference>
<dbReference type="GO" id="GO:0015760">
    <property type="term" value="P:glucose-6-phosphate transport"/>
    <property type="evidence" value="ECO:0000314"/>
    <property type="project" value="UniProtKB"/>
</dbReference>
<dbReference type="GO" id="GO:0035435">
    <property type="term" value="P:phosphate ion transmembrane transport"/>
    <property type="evidence" value="ECO:0000314"/>
    <property type="project" value="UniProtKB"/>
</dbReference>
<dbReference type="CDD" id="cd17344">
    <property type="entry name" value="MFS_SLC37A1_2"/>
    <property type="match status" value="1"/>
</dbReference>
<dbReference type="FunFam" id="1.20.1250.20:FF:000050">
    <property type="entry name" value="glucose-6-phosphate exchanger SLC37A2 isoform X1"/>
    <property type="match status" value="1"/>
</dbReference>
<dbReference type="FunFam" id="1.20.1250.20:FF:000028">
    <property type="entry name" value="Sugar phosphate exchanger 3 isoform 1"/>
    <property type="match status" value="1"/>
</dbReference>
<dbReference type="Gene3D" id="1.20.1250.20">
    <property type="entry name" value="MFS general substrate transporter like domains"/>
    <property type="match status" value="2"/>
</dbReference>
<dbReference type="InterPro" id="IPR011701">
    <property type="entry name" value="MFS"/>
</dbReference>
<dbReference type="InterPro" id="IPR020846">
    <property type="entry name" value="MFS_dom"/>
</dbReference>
<dbReference type="InterPro" id="IPR036259">
    <property type="entry name" value="MFS_trans_sf"/>
</dbReference>
<dbReference type="InterPro" id="IPR044740">
    <property type="entry name" value="SLC37A1_2"/>
</dbReference>
<dbReference type="InterPro" id="IPR000849">
    <property type="entry name" value="Sugar_P_transporter"/>
</dbReference>
<dbReference type="PANTHER" id="PTHR43184:SF11">
    <property type="entry name" value="GLUCOSE-6-PHOSPHATE EXCHANGER SLC37A1"/>
    <property type="match status" value="1"/>
</dbReference>
<dbReference type="PANTHER" id="PTHR43184">
    <property type="entry name" value="MAJOR FACILITATOR SUPERFAMILY TRANSPORTER 16, ISOFORM B"/>
    <property type="match status" value="1"/>
</dbReference>
<dbReference type="Pfam" id="PF07690">
    <property type="entry name" value="MFS_1"/>
    <property type="match status" value="1"/>
</dbReference>
<dbReference type="PIRSF" id="PIRSF002808">
    <property type="entry name" value="Hexose_phosphate_transp"/>
    <property type="match status" value="1"/>
</dbReference>
<dbReference type="SUPFAM" id="SSF103473">
    <property type="entry name" value="MFS general substrate transporter"/>
    <property type="match status" value="1"/>
</dbReference>
<dbReference type="PROSITE" id="PS50850">
    <property type="entry name" value="MFS"/>
    <property type="match status" value="1"/>
</dbReference>
<protein>
    <recommendedName>
        <fullName evidence="7">Glucose-6-phosphate exchanger SLC37A1</fullName>
    </recommendedName>
    <alternativeName>
        <fullName evidence="5">Glycerol-3-phosphate permease</fullName>
        <shortName evidence="5">G-3-P permease</shortName>
    </alternativeName>
    <alternativeName>
        <fullName evidence="8">Solute carrier family 37 member 1</fullName>
    </alternativeName>
</protein>